<sequence>MKYLIVGLGNIGGEYNGTRHNVGFRMVNALAEDGGVQFVEARYGAIARMRVKNAELILLKPNTYMNLSGNAVRYWMQQENIPREQVLVLVDDLALPFGTLRLKPKGSDAGHNGLKNIAEVMGSIDYARLRFGLGDEFSKGRQVDFVLGRFTPEEEEKLPELTKHAVEIIKSFCLAGIQRTMNRYN</sequence>
<dbReference type="EC" id="3.1.1.29" evidence="1"/>
<dbReference type="EMBL" id="AE015924">
    <property type="protein sequence ID" value="AAQ65406.1"/>
    <property type="molecule type" value="Genomic_DNA"/>
</dbReference>
<dbReference type="RefSeq" id="WP_004583810.1">
    <property type="nucleotide sequence ID" value="NC_002950.2"/>
</dbReference>
<dbReference type="SMR" id="Q7MXK9"/>
<dbReference type="STRING" id="242619.PG_0166"/>
<dbReference type="EnsemblBacteria" id="AAQ65406">
    <property type="protein sequence ID" value="AAQ65406"/>
    <property type="gene ID" value="PG_0166"/>
</dbReference>
<dbReference type="KEGG" id="pgi:PG_0166"/>
<dbReference type="eggNOG" id="COG0193">
    <property type="taxonomic scope" value="Bacteria"/>
</dbReference>
<dbReference type="HOGENOM" id="CLU_062456_4_1_10"/>
<dbReference type="Proteomes" id="UP000000588">
    <property type="component" value="Chromosome"/>
</dbReference>
<dbReference type="GO" id="GO:0005737">
    <property type="term" value="C:cytoplasm"/>
    <property type="evidence" value="ECO:0007669"/>
    <property type="project" value="UniProtKB-SubCell"/>
</dbReference>
<dbReference type="GO" id="GO:0004045">
    <property type="term" value="F:peptidyl-tRNA hydrolase activity"/>
    <property type="evidence" value="ECO:0007669"/>
    <property type="project" value="UniProtKB-UniRule"/>
</dbReference>
<dbReference type="GO" id="GO:0000049">
    <property type="term" value="F:tRNA binding"/>
    <property type="evidence" value="ECO:0007669"/>
    <property type="project" value="UniProtKB-UniRule"/>
</dbReference>
<dbReference type="GO" id="GO:0006515">
    <property type="term" value="P:protein quality control for misfolded or incompletely synthesized proteins"/>
    <property type="evidence" value="ECO:0007669"/>
    <property type="project" value="UniProtKB-UniRule"/>
</dbReference>
<dbReference type="GO" id="GO:0072344">
    <property type="term" value="P:rescue of stalled ribosome"/>
    <property type="evidence" value="ECO:0007669"/>
    <property type="project" value="UniProtKB-UniRule"/>
</dbReference>
<dbReference type="CDD" id="cd00462">
    <property type="entry name" value="PTH"/>
    <property type="match status" value="1"/>
</dbReference>
<dbReference type="FunFam" id="3.40.50.1470:FF:000001">
    <property type="entry name" value="Peptidyl-tRNA hydrolase"/>
    <property type="match status" value="1"/>
</dbReference>
<dbReference type="Gene3D" id="3.40.50.1470">
    <property type="entry name" value="Peptidyl-tRNA hydrolase"/>
    <property type="match status" value="1"/>
</dbReference>
<dbReference type="HAMAP" id="MF_00083">
    <property type="entry name" value="Pept_tRNA_hydro_bact"/>
    <property type="match status" value="1"/>
</dbReference>
<dbReference type="InterPro" id="IPR001328">
    <property type="entry name" value="Pept_tRNA_hydro"/>
</dbReference>
<dbReference type="InterPro" id="IPR018171">
    <property type="entry name" value="Pept_tRNA_hydro_CS"/>
</dbReference>
<dbReference type="InterPro" id="IPR036416">
    <property type="entry name" value="Pept_tRNA_hydro_sf"/>
</dbReference>
<dbReference type="NCBIfam" id="TIGR00447">
    <property type="entry name" value="pth"/>
    <property type="match status" value="1"/>
</dbReference>
<dbReference type="PANTHER" id="PTHR17224">
    <property type="entry name" value="PEPTIDYL-TRNA HYDROLASE"/>
    <property type="match status" value="1"/>
</dbReference>
<dbReference type="PANTHER" id="PTHR17224:SF1">
    <property type="entry name" value="PEPTIDYL-TRNA HYDROLASE"/>
    <property type="match status" value="1"/>
</dbReference>
<dbReference type="Pfam" id="PF01195">
    <property type="entry name" value="Pept_tRNA_hydro"/>
    <property type="match status" value="1"/>
</dbReference>
<dbReference type="SUPFAM" id="SSF53178">
    <property type="entry name" value="Peptidyl-tRNA hydrolase-like"/>
    <property type="match status" value="1"/>
</dbReference>
<dbReference type="PROSITE" id="PS01195">
    <property type="entry name" value="PEPT_TRNA_HYDROL_1"/>
    <property type="match status" value="1"/>
</dbReference>
<dbReference type="PROSITE" id="PS01196">
    <property type="entry name" value="PEPT_TRNA_HYDROL_2"/>
    <property type="match status" value="1"/>
</dbReference>
<comment type="function">
    <text evidence="1">Hydrolyzes ribosome-free peptidyl-tRNAs (with 1 or more amino acids incorporated), which drop off the ribosome during protein synthesis, or as a result of ribosome stalling.</text>
</comment>
<comment type="function">
    <text evidence="1">Catalyzes the release of premature peptidyl moieties from peptidyl-tRNA molecules trapped in stalled 50S ribosomal subunits, and thus maintains levels of free tRNAs and 50S ribosomes.</text>
</comment>
<comment type="catalytic activity">
    <reaction evidence="1">
        <text>an N-acyl-L-alpha-aminoacyl-tRNA + H2O = an N-acyl-L-amino acid + a tRNA + H(+)</text>
        <dbReference type="Rhea" id="RHEA:54448"/>
        <dbReference type="Rhea" id="RHEA-COMP:10123"/>
        <dbReference type="Rhea" id="RHEA-COMP:13883"/>
        <dbReference type="ChEBI" id="CHEBI:15377"/>
        <dbReference type="ChEBI" id="CHEBI:15378"/>
        <dbReference type="ChEBI" id="CHEBI:59874"/>
        <dbReference type="ChEBI" id="CHEBI:78442"/>
        <dbReference type="ChEBI" id="CHEBI:138191"/>
        <dbReference type="EC" id="3.1.1.29"/>
    </reaction>
</comment>
<comment type="subunit">
    <text evidence="1">Monomer.</text>
</comment>
<comment type="subcellular location">
    <subcellularLocation>
        <location evidence="1">Cytoplasm</location>
    </subcellularLocation>
</comment>
<comment type="similarity">
    <text evidence="1">Belongs to the PTH family.</text>
</comment>
<gene>
    <name evidence="1" type="primary">pth</name>
    <name type="ordered locus">PG_0166</name>
</gene>
<proteinExistence type="inferred from homology"/>
<protein>
    <recommendedName>
        <fullName evidence="1">Peptidyl-tRNA hydrolase</fullName>
        <shortName evidence="1">Pth</shortName>
        <ecNumber evidence="1">3.1.1.29</ecNumber>
    </recommendedName>
</protein>
<name>PTH_PORGI</name>
<feature type="chain" id="PRO_0000187791" description="Peptidyl-tRNA hydrolase">
    <location>
        <begin position="1"/>
        <end position="185"/>
    </location>
</feature>
<feature type="active site" description="Proton acceptor" evidence="1">
    <location>
        <position position="20"/>
    </location>
</feature>
<feature type="binding site" evidence="1">
    <location>
        <position position="15"/>
    </location>
    <ligand>
        <name>tRNA</name>
        <dbReference type="ChEBI" id="CHEBI:17843"/>
    </ligand>
</feature>
<feature type="binding site" evidence="1">
    <location>
        <position position="64"/>
    </location>
    <ligand>
        <name>tRNA</name>
        <dbReference type="ChEBI" id="CHEBI:17843"/>
    </ligand>
</feature>
<feature type="binding site" evidence="1">
    <location>
        <position position="66"/>
    </location>
    <ligand>
        <name>tRNA</name>
        <dbReference type="ChEBI" id="CHEBI:17843"/>
    </ligand>
</feature>
<feature type="binding site" evidence="1">
    <location>
        <position position="112"/>
    </location>
    <ligand>
        <name>tRNA</name>
        <dbReference type="ChEBI" id="CHEBI:17843"/>
    </ligand>
</feature>
<feature type="site" description="Discriminates between blocked and unblocked aminoacyl-tRNA" evidence="1">
    <location>
        <position position="10"/>
    </location>
</feature>
<feature type="site" description="Stabilizes the basic form of H active site to accept a proton" evidence="1">
    <location>
        <position position="91"/>
    </location>
</feature>
<reference key="1">
    <citation type="journal article" date="2003" name="J. Bacteriol.">
        <title>Complete genome sequence of the oral pathogenic bacterium Porphyromonas gingivalis strain W83.</title>
        <authorList>
            <person name="Nelson K.E."/>
            <person name="Fleischmann R.D."/>
            <person name="DeBoy R.T."/>
            <person name="Paulsen I.T."/>
            <person name="Fouts D.E."/>
            <person name="Eisen J.A."/>
            <person name="Daugherty S.C."/>
            <person name="Dodson R.J."/>
            <person name="Durkin A.S."/>
            <person name="Gwinn M.L."/>
            <person name="Haft D.H."/>
            <person name="Kolonay J.F."/>
            <person name="Nelson W.C."/>
            <person name="Mason T.M."/>
            <person name="Tallon L."/>
            <person name="Gray J."/>
            <person name="Granger D."/>
            <person name="Tettelin H."/>
            <person name="Dong H."/>
            <person name="Galvin J.L."/>
            <person name="Duncan M.J."/>
            <person name="Dewhirst F.E."/>
            <person name="Fraser C.M."/>
        </authorList>
    </citation>
    <scope>NUCLEOTIDE SEQUENCE [LARGE SCALE GENOMIC DNA]</scope>
    <source>
        <strain>ATCC BAA-308 / W83</strain>
    </source>
</reference>
<keyword id="KW-0963">Cytoplasm</keyword>
<keyword id="KW-0378">Hydrolase</keyword>
<keyword id="KW-1185">Reference proteome</keyword>
<keyword id="KW-0694">RNA-binding</keyword>
<keyword id="KW-0820">tRNA-binding</keyword>
<accession>Q7MXK9</accession>
<organism>
    <name type="scientific">Porphyromonas gingivalis (strain ATCC BAA-308 / W83)</name>
    <dbReference type="NCBI Taxonomy" id="242619"/>
    <lineage>
        <taxon>Bacteria</taxon>
        <taxon>Pseudomonadati</taxon>
        <taxon>Bacteroidota</taxon>
        <taxon>Bacteroidia</taxon>
        <taxon>Bacteroidales</taxon>
        <taxon>Porphyromonadaceae</taxon>
        <taxon>Porphyromonas</taxon>
    </lineage>
</organism>
<evidence type="ECO:0000255" key="1">
    <source>
        <dbReference type="HAMAP-Rule" id="MF_00083"/>
    </source>
</evidence>